<protein>
    <recommendedName>
        <fullName>Probable quinol oxidase subunit 4</fullName>
        <ecNumber>1.10.3.-</ecNumber>
    </recommendedName>
    <alternativeName>
        <fullName>Quinol oxidase polypeptide IV</fullName>
    </alternativeName>
</protein>
<sequence length="96" mass="10687">MSTIMKHTVGFIASIVLTLLAVYVTLYTSLTFHAKLTIIFGFAFVQAGLQLLMFMHLTEGKDGRLQTFKVIFALVITLCFVVGTYWVMQGGHSSHL</sequence>
<feature type="chain" id="PRO_0000275857" description="Probable quinol oxidase subunit 4">
    <location>
        <begin position="1"/>
        <end position="96"/>
    </location>
</feature>
<feature type="transmembrane region" description="Helical" evidence="2">
    <location>
        <begin position="8"/>
        <end position="28"/>
    </location>
</feature>
<feature type="transmembrane region" description="Helical" evidence="2">
    <location>
        <begin position="36"/>
        <end position="56"/>
    </location>
</feature>
<feature type="transmembrane region" description="Helical" evidence="2">
    <location>
        <begin position="68"/>
        <end position="88"/>
    </location>
</feature>
<dbReference type="EC" id="1.10.3.-"/>
<dbReference type="EMBL" id="AJ938182">
    <property type="protein sequence ID" value="CAI80612.1"/>
    <property type="molecule type" value="Genomic_DNA"/>
</dbReference>
<dbReference type="SMR" id="Q2YX17"/>
<dbReference type="KEGG" id="sab:SAB0924c"/>
<dbReference type="HOGENOM" id="CLU_140945_2_0_9"/>
<dbReference type="GO" id="GO:0009319">
    <property type="term" value="C:cytochrome o ubiquinol oxidase complex"/>
    <property type="evidence" value="ECO:0007669"/>
    <property type="project" value="TreeGrafter"/>
</dbReference>
<dbReference type="GO" id="GO:0005886">
    <property type="term" value="C:plasma membrane"/>
    <property type="evidence" value="ECO:0007669"/>
    <property type="project" value="UniProtKB-SubCell"/>
</dbReference>
<dbReference type="GO" id="GO:0009486">
    <property type="term" value="F:cytochrome bo3 ubiquinol oxidase activity"/>
    <property type="evidence" value="ECO:0007669"/>
    <property type="project" value="TreeGrafter"/>
</dbReference>
<dbReference type="GO" id="GO:0016682">
    <property type="term" value="F:oxidoreductase activity, acting on diphenols and related substances as donors, oxygen as acceptor"/>
    <property type="evidence" value="ECO:0007669"/>
    <property type="project" value="InterPro"/>
</dbReference>
<dbReference type="GO" id="GO:0015078">
    <property type="term" value="F:proton transmembrane transporter activity"/>
    <property type="evidence" value="ECO:0007669"/>
    <property type="project" value="TreeGrafter"/>
</dbReference>
<dbReference type="GO" id="GO:0019646">
    <property type="term" value="P:aerobic electron transport chain"/>
    <property type="evidence" value="ECO:0007669"/>
    <property type="project" value="TreeGrafter"/>
</dbReference>
<dbReference type="GO" id="GO:0042773">
    <property type="term" value="P:ATP synthesis coupled electron transport"/>
    <property type="evidence" value="ECO:0007669"/>
    <property type="project" value="InterPro"/>
</dbReference>
<dbReference type="GO" id="GO:0015990">
    <property type="term" value="P:electron transport coupled proton transport"/>
    <property type="evidence" value="ECO:0007669"/>
    <property type="project" value="TreeGrafter"/>
</dbReference>
<dbReference type="InterPro" id="IPR005171">
    <property type="entry name" value="Cyt_c_oxidase_su4_prok"/>
</dbReference>
<dbReference type="InterPro" id="IPR050968">
    <property type="entry name" value="Cytochrome_c_oxidase_bac_sub4"/>
</dbReference>
<dbReference type="InterPro" id="IPR014250">
    <property type="entry name" value="QoxD"/>
</dbReference>
<dbReference type="NCBIfam" id="TIGR02901">
    <property type="entry name" value="QoxD"/>
    <property type="match status" value="1"/>
</dbReference>
<dbReference type="PANTHER" id="PTHR36835">
    <property type="entry name" value="CYTOCHROME BO(3) UBIQUINOL OXIDASE SUBUNIT 4"/>
    <property type="match status" value="1"/>
</dbReference>
<dbReference type="PANTHER" id="PTHR36835:SF1">
    <property type="entry name" value="CYTOCHROME BO(3) UBIQUINOL OXIDASE SUBUNIT 4"/>
    <property type="match status" value="1"/>
</dbReference>
<dbReference type="Pfam" id="PF03626">
    <property type="entry name" value="COX4_pro"/>
    <property type="match status" value="1"/>
</dbReference>
<keyword id="KW-1003">Cell membrane</keyword>
<keyword id="KW-0472">Membrane</keyword>
<keyword id="KW-0560">Oxidoreductase</keyword>
<keyword id="KW-0812">Transmembrane</keyword>
<keyword id="KW-1133">Transmembrane helix</keyword>
<proteinExistence type="inferred from homology"/>
<gene>
    <name type="primary">qoxD</name>
    <name type="ordered locus">SAB0924c</name>
</gene>
<accession>Q2YX17</accession>
<evidence type="ECO:0000250" key="1"/>
<evidence type="ECO:0000255" key="2"/>
<evidence type="ECO:0000305" key="3"/>
<name>QOX4_STAAB</name>
<comment type="function">
    <text evidence="1">Catalyzes quinol oxidation with the concomitant reduction of oxygen to water.</text>
</comment>
<comment type="catalytic activity">
    <reaction>
        <text>2 a quinol + O2 = 2 a quinone + 2 H2O</text>
        <dbReference type="Rhea" id="RHEA:55376"/>
        <dbReference type="ChEBI" id="CHEBI:15377"/>
        <dbReference type="ChEBI" id="CHEBI:15379"/>
        <dbReference type="ChEBI" id="CHEBI:24646"/>
        <dbReference type="ChEBI" id="CHEBI:132124"/>
    </reaction>
</comment>
<comment type="subcellular location">
    <subcellularLocation>
        <location evidence="1">Cell membrane</location>
        <topology evidence="1">Multi-pass membrane protein</topology>
    </subcellularLocation>
</comment>
<comment type="similarity">
    <text evidence="3">Belongs to the cytochrome c oxidase bacterial subunit 4 family.</text>
</comment>
<organism>
    <name type="scientific">Staphylococcus aureus (strain bovine RF122 / ET3-1)</name>
    <dbReference type="NCBI Taxonomy" id="273036"/>
    <lineage>
        <taxon>Bacteria</taxon>
        <taxon>Bacillati</taxon>
        <taxon>Bacillota</taxon>
        <taxon>Bacilli</taxon>
        <taxon>Bacillales</taxon>
        <taxon>Staphylococcaceae</taxon>
        <taxon>Staphylococcus</taxon>
    </lineage>
</organism>
<reference key="1">
    <citation type="journal article" date="2007" name="PLoS ONE">
        <title>Molecular correlates of host specialization in Staphylococcus aureus.</title>
        <authorList>
            <person name="Herron-Olson L."/>
            <person name="Fitzgerald J.R."/>
            <person name="Musser J.M."/>
            <person name="Kapur V."/>
        </authorList>
    </citation>
    <scope>NUCLEOTIDE SEQUENCE [LARGE SCALE GENOMIC DNA]</scope>
    <source>
        <strain>bovine RF122 / ET3-1</strain>
    </source>
</reference>